<feature type="initiator methionine" description="Removed" evidence="26">
    <location>
        <position position="1"/>
    </location>
</feature>
<feature type="chain" id="PRO_0000088070" description="Tyrosine-protein kinase CSK">
    <location>
        <begin position="2"/>
        <end position="450"/>
    </location>
</feature>
<feature type="domain" description="SH3" evidence="6">
    <location>
        <begin position="9"/>
        <end position="70"/>
    </location>
</feature>
<feature type="domain" description="SH2" evidence="5">
    <location>
        <begin position="82"/>
        <end position="171"/>
    </location>
</feature>
<feature type="domain" description="Protein kinase" evidence="4">
    <location>
        <begin position="195"/>
        <end position="449"/>
    </location>
</feature>
<feature type="region of interest" description="Interaction with PTPN22" evidence="3">
    <location>
        <begin position="9"/>
        <end position="70"/>
    </location>
</feature>
<feature type="active site" description="Proton acceptor" evidence="4 7">
    <location>
        <position position="314"/>
    </location>
</feature>
<feature type="binding site" evidence="4">
    <location>
        <begin position="201"/>
        <end position="209"/>
    </location>
    <ligand>
        <name>ATP</name>
        <dbReference type="ChEBI" id="CHEBI:30616"/>
    </ligand>
</feature>
<feature type="binding site" evidence="4">
    <location>
        <position position="222"/>
    </location>
    <ligand>
        <name>ATP</name>
        <dbReference type="ChEBI" id="CHEBI:30616"/>
    </ligand>
</feature>
<feature type="modified residue" description="N-acetylserine" evidence="26">
    <location>
        <position position="2"/>
    </location>
</feature>
<feature type="modified residue" description="Phosphotyrosine" evidence="23">
    <location>
        <position position="184"/>
    </location>
</feature>
<feature type="modified residue" description="Phosphotyrosine" evidence="23">
    <location>
        <position position="304"/>
    </location>
</feature>
<feature type="modified residue" description="Phosphoserine; by PKA" evidence="10">
    <location>
        <position position="364"/>
    </location>
</feature>
<feature type="modified residue" description="Phosphotyrosine; by autocatalysis" evidence="18">
    <location>
        <position position="416"/>
    </location>
</feature>
<feature type="sequence variant" id="VAR_041678" evidence="16">
    <original>P</original>
    <variation>L</variation>
    <location>
        <position position="45"/>
    </location>
</feature>
<feature type="sequence variant" id="VAR_025203" description="In dbSNP:rs34866753." evidence="25">
    <original>G</original>
    <variation>D</variation>
    <location>
        <position position="287"/>
    </location>
</feature>
<feature type="sequence variant" id="VAR_025204" description="In dbSNP:rs34616395." evidence="25">
    <original>R</original>
    <variation>Q</variation>
    <location>
        <position position="398"/>
    </location>
</feature>
<feature type="sequence variant" id="VAR_025205" description="In dbSNP:rs35556162." evidence="25">
    <original>H</original>
    <variation>R</variation>
    <location>
        <position position="442"/>
    </location>
</feature>
<feature type="mutagenesis site" description="Abolishes phosphorylation." evidence="23">
    <original>Y</original>
    <variation>F</variation>
    <location>
        <position position="184"/>
    </location>
</feature>
<feature type="mutagenesis site" description="Decreases activity by two-thirds and alters conformation." evidence="23">
    <original>Y</original>
    <variation>F</variation>
    <location>
        <position position="304"/>
    </location>
</feature>
<feature type="mutagenesis site" description="Strong decrease of phosphorylation by PRKACA (catalytic subunit of PKA)." evidence="10">
    <original>S</original>
    <variation>A</variation>
    <location>
        <position position="364"/>
    </location>
</feature>
<feature type="strand" evidence="28">
    <location>
        <begin position="12"/>
        <end position="18"/>
    </location>
</feature>
<feature type="strand" evidence="28">
    <location>
        <begin position="35"/>
        <end position="41"/>
    </location>
</feature>
<feature type="strand" evidence="28">
    <location>
        <begin position="47"/>
        <end position="51"/>
    </location>
</feature>
<feature type="strand" evidence="28">
    <location>
        <begin position="57"/>
        <end position="61"/>
    </location>
</feature>
<feature type="strand" evidence="28">
    <location>
        <begin position="64"/>
        <end position="66"/>
    </location>
</feature>
<feature type="helix" evidence="30">
    <location>
        <begin position="77"/>
        <end position="79"/>
    </location>
</feature>
<feature type="strand" evidence="29">
    <location>
        <begin position="83"/>
        <end position="86"/>
    </location>
</feature>
<feature type="helix" evidence="30">
    <location>
        <begin position="89"/>
        <end position="95"/>
    </location>
</feature>
<feature type="strand" evidence="30">
    <location>
        <begin position="103"/>
        <end position="108"/>
    </location>
</feature>
<feature type="strand" evidence="30">
    <location>
        <begin position="116"/>
        <end position="122"/>
    </location>
</feature>
<feature type="strand" evidence="30">
    <location>
        <begin position="125"/>
        <end position="130"/>
    </location>
</feature>
<feature type="strand" evidence="30">
    <location>
        <begin position="132"/>
        <end position="134"/>
    </location>
</feature>
<feature type="strand" evidence="30">
    <location>
        <begin position="137"/>
        <end position="144"/>
    </location>
</feature>
<feature type="strand" evidence="30">
    <location>
        <begin position="146"/>
        <end position="148"/>
    </location>
</feature>
<feature type="helix" evidence="30">
    <location>
        <begin position="149"/>
        <end position="158"/>
    </location>
</feature>
<feature type="strand" evidence="30">
    <location>
        <begin position="163"/>
        <end position="165"/>
    </location>
</feature>
<feature type="helix" evidence="27">
    <location>
        <begin position="192"/>
        <end position="194"/>
    </location>
</feature>
<feature type="strand" evidence="27">
    <location>
        <begin position="195"/>
        <end position="203"/>
    </location>
</feature>
<feature type="strand" evidence="27">
    <location>
        <begin position="208"/>
        <end position="214"/>
    </location>
</feature>
<feature type="strand" evidence="27">
    <location>
        <begin position="217"/>
        <end position="223"/>
    </location>
</feature>
<feature type="helix" evidence="27">
    <location>
        <begin position="231"/>
        <end position="235"/>
    </location>
</feature>
<feature type="helix" evidence="27">
    <location>
        <begin position="237"/>
        <end position="240"/>
    </location>
</feature>
<feature type="strand" evidence="27">
    <location>
        <begin position="251"/>
        <end position="255"/>
    </location>
</feature>
<feature type="strand" evidence="27">
    <location>
        <begin position="263"/>
        <end position="266"/>
    </location>
</feature>
<feature type="helix" evidence="27">
    <location>
        <begin position="274"/>
        <end position="285"/>
    </location>
</feature>
<feature type="helix" evidence="27">
    <location>
        <begin position="288"/>
        <end position="307"/>
    </location>
</feature>
<feature type="helix" evidence="27">
    <location>
        <begin position="317"/>
        <end position="319"/>
    </location>
</feature>
<feature type="strand" evidence="27">
    <location>
        <begin position="320"/>
        <end position="322"/>
    </location>
</feature>
<feature type="strand" evidence="27">
    <location>
        <begin position="328"/>
        <end position="330"/>
    </location>
</feature>
<feature type="turn" evidence="27">
    <location>
        <begin position="350"/>
        <end position="352"/>
    </location>
</feature>
<feature type="helix" evidence="27">
    <location>
        <begin position="355"/>
        <end position="360"/>
    </location>
</feature>
<feature type="helix" evidence="27">
    <location>
        <begin position="365"/>
        <end position="380"/>
    </location>
</feature>
<feature type="helix" evidence="27">
    <location>
        <begin position="392"/>
        <end position="394"/>
    </location>
</feature>
<feature type="helix" evidence="27">
    <location>
        <begin position="395"/>
        <end position="399"/>
    </location>
</feature>
<feature type="turn" evidence="27">
    <location>
        <begin position="400"/>
        <end position="402"/>
    </location>
</feature>
<feature type="helix" evidence="27">
    <location>
        <begin position="413"/>
        <end position="422"/>
    </location>
</feature>
<feature type="helix" evidence="27">
    <location>
        <begin position="427"/>
        <end position="429"/>
    </location>
</feature>
<feature type="helix" evidence="27">
    <location>
        <begin position="433"/>
        <end position="446"/>
    </location>
</feature>
<sequence length="450" mass="50704">MSAIQAAWPSGTECIAKYNFHGTAEQDLPFCKGDVLTIVAVTKDPNWYKAKNKVGREGIIPANYVQKREGVKAGTKLSLMPWFHGKITREQAERLLYPPETGLFLVRESTNYPGDYTLCVSCDGKVEHYRIMYHASKLSIDEEVYFENLMQLVEHYTSDADGLCTRLIKPKVMEGTVAAQDEFYRSGWALNMKELKLLQTIGKGEFGDVMLGDYRGNKVAVKCIKNDATAQAFLAEASVMTQLRHSNLVQLLGVIVEEKGGLYIVTEYMAKGSLVDYLRSRGRSVLGGDCLLKFSLDVCEAMEYLEGNNFVHRDLAARNVLVSEDNVAKVSDFGLTKEASSTQDTGKLPVKWTAPEALREKKFSTKSDVWSFGILLWEIYSFGRVPYPRIPLKDVVPRVEKGYKMDAPDGCPPAVYEVMKNCWHLDAAMRPSFLQLREQLEHIKTHELHL</sequence>
<accession>P41240</accession>
<accession>Q2M3N2</accession>
<accession>Q6FGZ6</accession>
<name>CSK_HUMAN</name>
<keyword id="KW-0002">3D-structure</keyword>
<keyword id="KW-0007">Acetylation</keyword>
<keyword id="KW-1064">Adaptive immunity</keyword>
<keyword id="KW-0067">ATP-binding</keyword>
<keyword id="KW-1003">Cell membrane</keyword>
<keyword id="KW-0963">Cytoplasm</keyword>
<keyword id="KW-0391">Immunity</keyword>
<keyword id="KW-0418">Kinase</keyword>
<keyword id="KW-0460">Magnesium</keyword>
<keyword id="KW-0464">Manganese</keyword>
<keyword id="KW-0472">Membrane</keyword>
<keyword id="KW-0479">Metal-binding</keyword>
<keyword id="KW-0547">Nucleotide-binding</keyword>
<keyword id="KW-0597">Phosphoprotein</keyword>
<keyword id="KW-1267">Proteomics identification</keyword>
<keyword id="KW-1185">Reference proteome</keyword>
<keyword id="KW-0727">SH2 domain</keyword>
<keyword id="KW-0728">SH3 domain</keyword>
<keyword id="KW-0808">Transferase</keyword>
<keyword id="KW-0829">Tyrosine-protein kinase</keyword>
<organism>
    <name type="scientific">Homo sapiens</name>
    <name type="common">Human</name>
    <dbReference type="NCBI Taxonomy" id="9606"/>
    <lineage>
        <taxon>Eukaryota</taxon>
        <taxon>Metazoa</taxon>
        <taxon>Chordata</taxon>
        <taxon>Craniata</taxon>
        <taxon>Vertebrata</taxon>
        <taxon>Euteleostomi</taxon>
        <taxon>Mammalia</taxon>
        <taxon>Eutheria</taxon>
        <taxon>Euarchontoglires</taxon>
        <taxon>Primates</taxon>
        <taxon>Haplorrhini</taxon>
        <taxon>Catarrhini</taxon>
        <taxon>Hominidae</taxon>
        <taxon>Homo</taxon>
    </lineage>
</organism>
<gene>
    <name type="primary">CSK</name>
</gene>
<proteinExistence type="evidence at protein level"/>
<reference key="1">
    <citation type="journal article" date="1991" name="Oncogene">
        <title>CYL encodes a putative cytoplasmic tyrosine kinase lacking the conserved tyrosine autophosphorylation site (Y416src).</title>
        <authorList>
            <person name="Partanen J."/>
            <person name="Armstrong E."/>
            <person name="Bergman M."/>
            <person name="Maekelae T.P."/>
            <person name="Hirvonen H."/>
            <person name="Huebner K."/>
            <person name="Alitalo K."/>
        </authorList>
    </citation>
    <scope>NUCLEOTIDE SEQUENCE [MRNA]</scope>
    <scope>PHOSPHORYLATION AT TYR-416</scope>
</reference>
<reference key="2">
    <citation type="journal article" date="1991" name="Proc. Natl. Acad. Sci. U.S.A.">
        <title>Two additional protein-tyrosine kinases expressed in human lung: fourth member of the fibroblast growth factor receptor family and an intracellular protein-tyrosine kinase.</title>
        <authorList>
            <person name="Braeuninger A."/>
            <person name="Holtrich U."/>
            <person name="Strebhardt K."/>
            <person name="Ruebsamen-Waigmann H."/>
        </authorList>
    </citation>
    <scope>NUCLEOTIDE SEQUENCE [MRNA]</scope>
    <source>
        <tissue>Lung</tissue>
    </source>
</reference>
<reference key="3">
    <citation type="journal article" date="1992" name="Gene">
        <title>Isolation and characterization of a human gene that encodes a new subclass of protein tyrosine kinases.</title>
        <authorList>
            <person name="Brauninger A."/>
            <person name="Holtrich U."/>
            <person name="Strebhardt K."/>
            <person name="Rubsamen-Waigmann H."/>
        </authorList>
    </citation>
    <scope>NUCLEOTIDE SEQUENCE [GENOMIC DNA]</scope>
    <scope>TISSUE SPECIFICITY</scope>
</reference>
<reference key="4">
    <citation type="journal article" date="1993" name="Oncogene">
        <title>Characterization of the human CSK locus.</title>
        <authorList>
            <person name="Braeuninger A."/>
            <person name="Karn T."/>
            <person name="Strebhardt K."/>
            <person name="Ruebsamen-Waigmann H."/>
        </authorList>
    </citation>
    <scope>NUCLEOTIDE SEQUENCE [GENOMIC DNA]</scope>
</reference>
<reference key="5">
    <citation type="submission" date="2004-06" db="EMBL/GenBank/DDBJ databases">
        <title>Cloning of human full open reading frames in Gateway(TM) system entry vector (pDONR201).</title>
        <authorList>
            <person name="Halleck A."/>
            <person name="Ebert L."/>
            <person name="Mkoundinya M."/>
            <person name="Schick M."/>
            <person name="Eisenstein S."/>
            <person name="Neubert P."/>
            <person name="Kstrang K."/>
            <person name="Schatten R."/>
            <person name="Shen B."/>
            <person name="Henze S."/>
            <person name="Mar W."/>
            <person name="Korn B."/>
            <person name="Zuo D."/>
            <person name="Hu Y."/>
            <person name="LaBaer J."/>
        </authorList>
    </citation>
    <scope>NUCLEOTIDE SEQUENCE [LARGE SCALE MRNA]</scope>
</reference>
<reference key="6">
    <citation type="submission" date="2005-05" db="EMBL/GenBank/DDBJ databases">
        <authorList>
            <consortium name="NIEHS SNPs program"/>
        </authorList>
    </citation>
    <scope>NUCLEOTIDE SEQUENCE [GENOMIC DNA]</scope>
    <scope>VARIANTS ASP-287; GLN-398 AND ARG-442</scope>
</reference>
<reference key="7">
    <citation type="journal article" date="2004" name="Genome Res.">
        <title>The status, quality, and expansion of the NIH full-length cDNA project: the Mammalian Gene Collection (MGC).</title>
        <authorList>
            <consortium name="The MGC Project Team"/>
        </authorList>
    </citation>
    <scope>NUCLEOTIDE SEQUENCE [LARGE SCALE MRNA]</scope>
    <source>
        <tissue>Brain</tissue>
        <tissue>Uterus</tissue>
    </source>
</reference>
<reference key="8">
    <citation type="journal article" date="1992" name="EMBO J.">
        <title>The human p50csk tyrosine kinase phosphorylates p56lck at Tyr-505 and down regulates its catalytic activity.</title>
        <authorList>
            <person name="Bergman M."/>
            <person name="Mustelin T."/>
            <person name="Oetken C."/>
            <person name="Partanen J."/>
            <person name="Flint N.A."/>
            <person name="Amrein K.E."/>
            <person name="Autero M."/>
            <person name="Burn P."/>
            <person name="Alitalo K."/>
        </authorList>
    </citation>
    <scope>FUNCTION IN PHOSPHORYLATION OF LCK</scope>
    <scope>CATALYTIC ACTIVITY</scope>
    <scope>COFACTOR</scope>
</reference>
<reference key="9">
    <citation type="journal article" date="1993" name="Oncogene">
        <title>Recombinant Csk expressed in Escherichia coli is autophosphorylated on tyrosine residue(s).</title>
        <authorList>
            <person name="Bougeret C."/>
            <person name="Rothhut B."/>
            <person name="Jullien P."/>
            <person name="Fischer S."/>
            <person name="Benarous R."/>
        </authorList>
    </citation>
    <scope>AUTOPHOSPHORYLATION</scope>
    <scope>CATALYTIC ACTIVITY</scope>
</reference>
<reference key="10">
    <citation type="journal article" date="1997" name="Arch. Biochem. Biophys.">
        <title>Expression, purification, and initial characterization of human Yes protein tyrosine kinase from a bacterial expression system.</title>
        <authorList>
            <person name="Sun G."/>
            <person name="Budde R.J."/>
        </authorList>
    </citation>
    <scope>FUNCTION IN PHOSPHORYLATION OF YES1</scope>
    <scope>CATALYTIC ACTIVITY</scope>
    <scope>COFACTOR</scope>
</reference>
<reference key="11">
    <citation type="journal article" date="1997" name="Biochem. J.">
        <title>Identification of csk tyrosine phosphorylation sites and a tyrosine residue important for kinase domain structure.</title>
        <authorList>
            <person name="Joukov V."/>
            <person name="Vihinen M."/>
            <person name="Vainikka S."/>
            <person name="Sowadski J.M."/>
            <person name="Alitalo K."/>
            <person name="Bergman M."/>
        </authorList>
    </citation>
    <scope>PHOSPHORYLATION AT TYR-184 AND TYR-304</scope>
    <scope>MUTAGENESIS OF TYR-184 AND TYR-304</scope>
</reference>
<reference key="12">
    <citation type="journal article" date="2000" name="FEBS Lett.">
        <title>Phosphorylation of Hic-5 at tyrosine 60 by CAKbeta and Fyn.</title>
        <authorList>
            <person name="Ishino M."/>
            <person name="Aoto H."/>
            <person name="Sasaski H."/>
            <person name="Suzuki R."/>
            <person name="Sasaki T."/>
        </authorList>
    </citation>
    <scope>INTERACTION WITH TGFB1I1</scope>
</reference>
<reference key="13">
    <citation type="journal article" date="2000" name="J. Exp. Med.">
        <title>Phosphoprotein associated with glycosphingolipid-enriched microdomains (PAG), a novel ubiquitously expressed transmembrane adaptor protein, binds the protein tyrosine kinase csk and is involved in regulation of T cell activation.</title>
        <authorList>
            <person name="Brdicka T."/>
            <person name="Pavlistova D."/>
            <person name="Bruyns E."/>
            <person name="Leo A."/>
            <person name="Korinek V."/>
            <person name="Angelisova P."/>
            <person name="Scherer J."/>
            <person name="Shevchenko A."/>
            <person name="Shevchenko A."/>
            <person name="Hilgert I."/>
            <person name="Cerny J."/>
            <person name="Drbal K."/>
            <person name="Kuramitsu Y."/>
            <person name="Horejsi V."/>
            <person name="Schraven B."/>
        </authorList>
    </citation>
    <scope>INTERACTION WITH PAG1</scope>
</reference>
<reference key="14">
    <citation type="journal article" date="2001" name="Eur. J. Immunol.">
        <title>Structural and functional dissection of the cytoplasmic domain of the transmembrane adaptor protein SIT (SHP2-interacting transmembrane adaptor protein).</title>
        <authorList>
            <person name="Pfrepper K.-I."/>
            <person name="Marie-Cardine A."/>
            <person name="Simeoni L."/>
            <person name="Kuramitsu Y."/>
            <person name="Leo A."/>
            <person name="Spicka J."/>
            <person name="Hilgert I."/>
            <person name="Scherer J."/>
            <person name="Schraven B."/>
        </authorList>
    </citation>
    <scope>INTERACTION WITH SIT1</scope>
</reference>
<reference key="15">
    <citation type="journal article" date="2001" name="J. Exp. Med.">
        <title>Activation of the COOH-terminal Src kinase (Csk) by cAMP-dependent protein kinase inhibits signaling through the T cell receptor.</title>
        <authorList>
            <person name="Vang T."/>
            <person name="Torgersen K.M."/>
            <person name="Sundvold V."/>
            <person name="Saxena M."/>
            <person name="Levy F.O."/>
            <person name="Skalhegg B.S."/>
            <person name="Hansson V."/>
            <person name="Mustelin T."/>
            <person name="Tasken K."/>
        </authorList>
    </citation>
    <scope>PHOSPHORYLATION AT SER-364 BY PKA</scope>
    <scope>MUTAGENESIS OF SER-364</scope>
</reference>
<reference key="16">
    <citation type="journal article" date="2003" name="J. Exp. Med.">
        <title>LIME: a new membrane raft-associated adaptor protein involved in CD4 and CD8 coreceptor signaling.</title>
        <authorList>
            <person name="Brdickova N."/>
            <person name="Brdicka T."/>
            <person name="Angelisova P."/>
            <person name="Horvath O."/>
            <person name="Spicka J."/>
            <person name="Hilgert I."/>
            <person name="Paces J."/>
            <person name="Simeoni L."/>
            <person name="Kliche S."/>
            <person name="Merten C."/>
            <person name="Schraven B."/>
            <person name="Horejsi V."/>
        </authorList>
    </citation>
    <scope>INTERACTION WITH LIME1</scope>
</reference>
<reference key="17">
    <citation type="journal article" date="2004" name="Am. J. Hum. Genet.">
        <title>A missense single-nucleotide polymorphism in a gene encoding a protein tyrosine phosphatase (PTPN22) is associated with rheumatoid arthritis.</title>
        <authorList>
            <person name="Begovich A.B."/>
            <person name="Carlton V.E."/>
            <person name="Honigberg L.A."/>
            <person name="Schrodi S.J."/>
            <person name="Chokkalingam A.P."/>
            <person name="Alexander H.C."/>
            <person name="Ardlie K.G."/>
            <person name="Huang Q."/>
            <person name="Smith A.M."/>
            <person name="Spoerke J.M."/>
            <person name="Conn M.T."/>
            <person name="Chang M."/>
            <person name="Chang S.Y."/>
            <person name="Saiki R.K."/>
            <person name="Catanese J.J."/>
            <person name="Leong D.U."/>
            <person name="Garcia V.E."/>
            <person name="McAllister L.B."/>
            <person name="Jeffery D.A."/>
            <person name="Lee A.T."/>
            <person name="Batliwalla F."/>
            <person name="Remmers E."/>
            <person name="Criswell L.A."/>
            <person name="Seldin M.F."/>
            <person name="Kastner D.L."/>
            <person name="Amos C.I."/>
            <person name="Sninsky J.J."/>
            <person name="Gregersen P.K."/>
        </authorList>
    </citation>
    <scope>INTERACTION WITH PTPN22</scope>
</reference>
<reference key="18">
    <citation type="journal article" date="2005" name="Growth Factors">
        <title>C-terminal Src kinase (CSK) and CSK-homologous kinase (CHK) -- endogenous negative regulators of Src-family protein kinases.</title>
        <authorList>
            <person name="Chong Y.P."/>
            <person name="Mulhern T.D."/>
            <person name="Cheng H.C."/>
        </authorList>
    </citation>
    <scope>REVIEW</scope>
</reference>
<reference key="19">
    <citation type="journal article" date="2007" name="EMBO J.">
        <title>p140Cap protein suppresses tumour cell properties, regulating Csk and Src kinase activity.</title>
        <authorList>
            <person name="Di Stefano P."/>
            <person name="Damiano L."/>
            <person name="Cabodi S."/>
            <person name="Aramu S."/>
            <person name="Tordella L."/>
            <person name="Praduroux A."/>
            <person name="Piva R."/>
            <person name="Cavallo F."/>
            <person name="Forni G."/>
            <person name="Silengo L."/>
            <person name="Tarone G."/>
            <person name="Turco E."/>
            <person name="Defilippi P."/>
        </authorList>
    </citation>
    <scope>INTERACTION WITH SRCIN1</scope>
</reference>
<reference key="20">
    <citation type="journal article" date="2009" name="Anal. Chem.">
        <title>Lys-N and trypsin cover complementary parts of the phosphoproteome in a refined SCX-based approach.</title>
        <authorList>
            <person name="Gauci S."/>
            <person name="Helbig A.O."/>
            <person name="Slijper M."/>
            <person name="Krijgsveld J."/>
            <person name="Heck A.J."/>
            <person name="Mohammed S."/>
        </authorList>
    </citation>
    <scope>ACETYLATION [LARGE SCALE ANALYSIS] AT SER-2</scope>
    <scope>CLEAVAGE OF INITIATOR METHIONINE [LARGE SCALE ANALYSIS]</scope>
    <scope>IDENTIFICATION BY MASS SPECTROMETRY [LARGE SCALE ANALYSIS]</scope>
</reference>
<reference key="21">
    <citation type="journal article" date="2009" name="PLoS ONE">
        <title>The tyrosine kinase Csk dimerizes through Its SH3 domain.</title>
        <authorList>
            <person name="Levinson N.M."/>
            <person name="Visperas P.R."/>
            <person name="Kuriyan J."/>
        </authorList>
    </citation>
    <scope>HOMODIMERIZATION</scope>
</reference>
<reference key="22">
    <citation type="journal article" date="2011" name="BMC Syst. Biol.">
        <title>Initial characterization of the human central proteome.</title>
        <authorList>
            <person name="Burkard T.R."/>
            <person name="Planyavsky M."/>
            <person name="Kaupe I."/>
            <person name="Breitwieser F.P."/>
            <person name="Buerckstuemmer T."/>
            <person name="Bennett K.L."/>
            <person name="Superti-Furga G."/>
            <person name="Colinge J."/>
        </authorList>
    </citation>
    <scope>IDENTIFICATION BY MASS SPECTROMETRY [LARGE SCALE ANALYSIS]</scope>
</reference>
<reference key="23">
    <citation type="journal article" date="2011" name="Cell. Signal.">
        <title>RhoH modulates pre-TCR and TCR signalling by regulating LCK.</title>
        <authorList>
            <person name="Wang H."/>
            <person name="Zeng X."/>
            <person name="Fan Z."/>
            <person name="Lim B."/>
        </authorList>
    </citation>
    <scope>INTERACTION WITH RHOH</scope>
</reference>
<reference key="24">
    <citation type="journal article" date="2011" name="Mol. Cell. Biol.">
        <title>SCIMP, a transmembrane adapter protein involved in major histocompatibility complex class II signaling.</title>
        <authorList>
            <person name="Draber P."/>
            <person name="Vonkova I."/>
            <person name="Stepanek O."/>
            <person name="Hrdinka M."/>
            <person name="Kucova M."/>
            <person name="Skopcova T."/>
            <person name="Otahal P."/>
            <person name="Angelisova P."/>
            <person name="Horejsi V."/>
            <person name="Yeung M."/>
            <person name="Weiss A."/>
            <person name="Brdicka T."/>
        </authorList>
    </citation>
    <scope>INTERACTION WITH SCIMP</scope>
</reference>
<reference key="25">
    <citation type="journal article" date="2013" name="J. Bone Miner. Res.">
        <title>Targeted disruption of leucine-rich repeat kinase 1 but not leucine-rich repeat kinase 2 in mice causes severe osteopetrosis.</title>
        <authorList>
            <person name="Xing W."/>
            <person name="Liu J."/>
            <person name="Cheng S."/>
            <person name="Vogel P."/>
            <person name="Mohan S."/>
            <person name="Brommage R."/>
        </authorList>
    </citation>
    <scope>INTERACTION WITH LRRK1</scope>
</reference>
<reference key="26">
    <citation type="journal article" date="1994" name="FEBS Lett.">
        <title>The crystal structure of human CskSH3: structural diversity near the RT-Src and n-Src loop.</title>
        <authorList>
            <person name="Borchert T.V."/>
            <person name="Mathieu M."/>
            <person name="Zeelen J.P."/>
            <person name="Courtneidge S.A."/>
            <person name="Wierenga R.K."/>
        </authorList>
    </citation>
    <scope>X-RAY CRYSTALLOGRAPHY (2.5 ANGSTROMS) OF 1-71</scope>
</reference>
<reference key="27">
    <citation type="journal article" date="2007" name="Nature">
        <title>Patterns of somatic mutation in human cancer genomes.</title>
        <authorList>
            <person name="Greenman C."/>
            <person name="Stephens P."/>
            <person name="Smith R."/>
            <person name="Dalgliesh G.L."/>
            <person name="Hunter C."/>
            <person name="Bignell G."/>
            <person name="Davies H."/>
            <person name="Teague J."/>
            <person name="Butler A."/>
            <person name="Stevens C."/>
            <person name="Edkins S."/>
            <person name="O'Meara S."/>
            <person name="Vastrik I."/>
            <person name="Schmidt E.E."/>
            <person name="Avis T."/>
            <person name="Barthorpe S."/>
            <person name="Bhamra G."/>
            <person name="Buck G."/>
            <person name="Choudhury B."/>
            <person name="Clements J."/>
            <person name="Cole J."/>
            <person name="Dicks E."/>
            <person name="Forbes S."/>
            <person name="Gray K."/>
            <person name="Halliday K."/>
            <person name="Harrison R."/>
            <person name="Hills K."/>
            <person name="Hinton J."/>
            <person name="Jenkinson A."/>
            <person name="Jones D."/>
            <person name="Menzies A."/>
            <person name="Mironenko T."/>
            <person name="Perry J."/>
            <person name="Raine K."/>
            <person name="Richardson D."/>
            <person name="Shepherd R."/>
            <person name="Small A."/>
            <person name="Tofts C."/>
            <person name="Varian J."/>
            <person name="Webb T."/>
            <person name="West S."/>
            <person name="Widaa S."/>
            <person name="Yates A."/>
            <person name="Cahill D.P."/>
            <person name="Louis D.N."/>
            <person name="Goldstraw P."/>
            <person name="Nicholson A.G."/>
            <person name="Brasseur F."/>
            <person name="Looijenga L."/>
            <person name="Weber B.L."/>
            <person name="Chiew Y.-E."/>
            <person name="DeFazio A."/>
            <person name="Greaves M.F."/>
            <person name="Green A.R."/>
            <person name="Campbell P."/>
            <person name="Birney E."/>
            <person name="Easton D.F."/>
            <person name="Chenevix-Trench G."/>
            <person name="Tan M.-H."/>
            <person name="Khoo S.K."/>
            <person name="Teh B.T."/>
            <person name="Yuen S.T."/>
            <person name="Leung S.Y."/>
            <person name="Wooster R."/>
            <person name="Futreal P.A."/>
            <person name="Stratton M.R."/>
        </authorList>
    </citation>
    <scope>VARIANT [LARGE SCALE ANALYSIS] LEU-45</scope>
</reference>
<comment type="function">
    <text evidence="15 24">Non-receptor tyrosine-protein kinase that plays an important role in the regulation of cell growth, differentiation, migration and immune response. Phosphorylates tyrosine residues located in the C-terminal tails of Src-family kinases (SFKs) including LCK, SRC, HCK, FYN, LYN, CSK or YES1. Upon tail phosphorylation, Src-family members engage in intramolecular interactions between the phosphotyrosine tail and the SH2 domain that result in an inactive conformation. To inhibit SFKs, CSK is recruited to the plasma membrane via binding to transmembrane proteins or adapter proteins located near the plasma membrane. Suppresses signaling by various surface receptors, including T-cell receptor (TCR) and B-cell receptor (BCR) by phosphorylating and maintaining inactive several positive effectors such as FYN or LCK.</text>
</comment>
<comment type="catalytic activity">
    <reaction evidence="15 22 24">
        <text>L-tyrosyl-[protein] + ATP = O-phospho-L-tyrosyl-[protein] + ADP + H(+)</text>
        <dbReference type="Rhea" id="RHEA:10596"/>
        <dbReference type="Rhea" id="RHEA-COMP:10136"/>
        <dbReference type="Rhea" id="RHEA-COMP:20101"/>
        <dbReference type="ChEBI" id="CHEBI:15378"/>
        <dbReference type="ChEBI" id="CHEBI:30616"/>
        <dbReference type="ChEBI" id="CHEBI:46858"/>
        <dbReference type="ChEBI" id="CHEBI:61978"/>
        <dbReference type="ChEBI" id="CHEBI:456216"/>
        <dbReference type="EC" id="2.7.10.2"/>
    </reaction>
</comment>
<comment type="cofactor">
    <cofactor evidence="24">
        <name>Mg(2+)</name>
        <dbReference type="ChEBI" id="CHEBI:18420"/>
    </cofactor>
    <cofactor evidence="15">
        <name>Mn(2+)</name>
        <dbReference type="ChEBI" id="CHEBI:29035"/>
    </cofactor>
</comment>
<comment type="subunit">
    <text evidence="2 8 9 11 13 14 17 19 20 21">Homodimer (via SH3-domain) (PubMed:19888460). Interacts with PTPN22 (PubMed:15208781). Interacts with phosphorylated SIT1, PAG1, LIME1 and TGFB1I1; these interactions serve to recruit CSK to the membrane where it can phosphorylate and inhibit Src-family kinases (PubMed:10790433, PubMed:10838081, PubMed:11433379, PubMed:14610046). Interacts with SRCIN1 (PubMed:17525734). Interacts with RHOH (PubMed:20851766). Interacts (via SH2 domain) with SCIMP; this interaction is dependent on phosphorylation of SCIMP 'Tyr-107' (PubMed:21930792). Interacts (via SH2 domain) with PRAG1 (when phosphorylated at 'Tyr-391'); this interaction prevents translocation of CSK from the cytoplasm to the membrane leading to increased activity of CSK (By similarity). Interacts with LRRK1 (PubMed:23526378).</text>
</comment>
<comment type="interaction">
    <interactant intactId="EBI-1380630">
        <id>P41240</id>
    </interactant>
    <interactant intactId="EBI-1380630">
        <id>P41240</id>
        <label>CSK</label>
    </interactant>
    <organismsDiffer>false</organismsDiffer>
    <experiments>7</experiments>
</comment>
<comment type="interaction">
    <interactant intactId="EBI-1380630">
        <id>P41240</id>
    </interactant>
    <interactant intactId="EBI-742054">
        <id>Q96D03</id>
        <label>DDIT4L</label>
    </interactant>
    <organismsDiffer>false</organismsDiffer>
    <experiments>3</experiments>
</comment>
<comment type="interaction">
    <interactant intactId="EBI-1380630">
        <id>P41240</id>
    </interactant>
    <interactant intactId="EBI-475981">
        <id>P08069</id>
        <label>IGF1R</label>
    </interactant>
    <organismsDiffer>false</organismsDiffer>
    <experiments>5</experiments>
</comment>
<comment type="interaction">
    <interactant intactId="EBI-1380630">
        <id>P41240</id>
    </interactant>
    <interactant intactId="EBI-9355810">
        <id>Q5T7N3</id>
        <label>KANK4</label>
    </interactant>
    <organismsDiffer>false</organismsDiffer>
    <experiments>3</experiments>
</comment>
<comment type="interaction">
    <interactant intactId="EBI-1380630">
        <id>P41240</id>
    </interactant>
    <interactant intactId="EBI-2828115">
        <id>Q9NWQ8</id>
        <label>PAG1</label>
    </interactant>
    <organismsDiffer>false</organismsDiffer>
    <experiments>6</experiments>
</comment>
<comment type="interaction">
    <interactant intactId="EBI-1380630">
        <id>P41240</id>
    </interactant>
    <interactant intactId="EBI-1341">
        <id>P08575</id>
        <label>PTPRC</label>
    </interactant>
    <organismsDiffer>false</organismsDiffer>
    <experiments>3</experiments>
</comment>
<comment type="interaction">
    <interactant intactId="EBI-1380630">
        <id>P41240</id>
    </interactant>
    <interactant intactId="EBI-702209">
        <id>P49023</id>
        <label>PXN</label>
    </interactant>
    <organismsDiffer>false</organismsDiffer>
    <experiments>4</experiments>
</comment>
<comment type="interaction">
    <interactant intactId="EBI-1380630">
        <id>P41240</id>
    </interactant>
    <interactant intactId="EBI-2872510">
        <id>Q6UWF3</id>
        <label>SCIMP</label>
    </interactant>
    <organismsDiffer>false</organismsDiffer>
    <experiments>3</experiments>
</comment>
<comment type="interaction">
    <interactant intactId="EBI-1380630">
        <id>P41240</id>
    </interactant>
    <interactant intactId="EBI-55027296">
        <id>Q9F220</id>
        <label>cagA</label>
    </interactant>
    <organismsDiffer>true</organismsDiffer>
    <experiments>3</experiments>
</comment>
<comment type="interaction">
    <interactant intactId="EBI-1380630">
        <id>P41240</id>
    </interactant>
    <interactant intactId="EBI-26445163">
        <id>Q7VLE8</id>
        <label>lspA1</label>
    </interactant>
    <organismsDiffer>true</organismsDiffer>
    <experiments>4</experiments>
</comment>
<comment type="interaction">
    <interactant intactId="EBI-1380630">
        <id>P41240</id>
    </interactant>
    <interactant intactId="EBI-848039">
        <id>P00523</id>
        <label>SRC</label>
    </interactant>
    <organismsDiffer>true</organismsDiffer>
    <experiments>7</experiments>
</comment>
<comment type="subcellular location">
    <subcellularLocation>
        <location evidence="1">Cytoplasm</location>
    </subcellularLocation>
    <subcellularLocation>
        <location evidence="1">Cell membrane</location>
    </subcellularLocation>
    <text evidence="1">Mainly cytoplasmic, also present in lipid rafts.</text>
</comment>
<comment type="tissue specificity">
    <text evidence="12">Expressed in lung and macrophages.</text>
</comment>
<comment type="domain">
    <text>The architecture of this protein is similar to that of Src-family kinases (SFKs) with one N-terminal SH3 domain, one SH2 domain, and a C-terminal kinase domain.</text>
</comment>
<comment type="PTM">
    <text evidence="10 23">Phosphorylated at Ser-364 by PKA, leading to increased activity. Autophosphorylated.</text>
</comment>
<comment type="similarity">
    <text evidence="4">Belongs to the protein kinase superfamily. Tyr protein kinase family. CSK subfamily.</text>
</comment>
<dbReference type="EC" id="2.7.10.2" evidence="15 22 24"/>
<dbReference type="EMBL" id="X60114">
    <property type="protein sequence ID" value="CAA42713.1"/>
    <property type="molecule type" value="mRNA"/>
</dbReference>
<dbReference type="EMBL" id="X59932">
    <property type="protein sequence ID" value="CAA42556.1"/>
    <property type="molecule type" value="mRNA"/>
</dbReference>
<dbReference type="EMBL" id="X74765">
    <property type="protein sequence ID" value="CAB58562.1"/>
    <property type="molecule type" value="Genomic_DNA"/>
</dbReference>
<dbReference type="EMBL" id="CR541960">
    <property type="protein sequence ID" value="CAG46758.1"/>
    <property type="molecule type" value="mRNA"/>
</dbReference>
<dbReference type="EMBL" id="DQ075211">
    <property type="protein sequence ID" value="AAY57329.1"/>
    <property type="molecule type" value="Genomic_DNA"/>
</dbReference>
<dbReference type="EMBL" id="BC104847">
    <property type="protein sequence ID" value="AAI04848.1"/>
    <property type="molecule type" value="mRNA"/>
</dbReference>
<dbReference type="EMBL" id="BC104875">
    <property type="protein sequence ID" value="AAI04876.1"/>
    <property type="molecule type" value="mRNA"/>
</dbReference>
<dbReference type="EMBL" id="BC106073">
    <property type="protein sequence ID" value="AAI06074.1"/>
    <property type="molecule type" value="mRNA"/>
</dbReference>
<dbReference type="CCDS" id="CCDS10269.1"/>
<dbReference type="PIR" id="JH0559">
    <property type="entry name" value="JH0559"/>
</dbReference>
<dbReference type="RefSeq" id="NP_001120662.1">
    <property type="nucleotide sequence ID" value="NM_001127190.2"/>
</dbReference>
<dbReference type="RefSeq" id="NP_001341917.1">
    <property type="nucleotide sequence ID" value="NM_001354988.2"/>
</dbReference>
<dbReference type="RefSeq" id="NP_001374018.1">
    <property type="nucleotide sequence ID" value="NM_001387089.1"/>
</dbReference>
<dbReference type="RefSeq" id="NP_001374019.1">
    <property type="nucleotide sequence ID" value="NM_001387090.1"/>
</dbReference>
<dbReference type="RefSeq" id="NP_001374020.1">
    <property type="nucleotide sequence ID" value="NM_001387091.1"/>
</dbReference>
<dbReference type="RefSeq" id="NP_001374021.1">
    <property type="nucleotide sequence ID" value="NM_001387092.1"/>
</dbReference>
<dbReference type="RefSeq" id="NP_001374022.1">
    <property type="nucleotide sequence ID" value="NM_001387093.1"/>
</dbReference>
<dbReference type="RefSeq" id="NP_004374.1">
    <property type="nucleotide sequence ID" value="NM_004383.3"/>
</dbReference>
<dbReference type="RefSeq" id="XP_005254222.1">
    <property type="nucleotide sequence ID" value="XM_005254165.4"/>
</dbReference>
<dbReference type="RefSeq" id="XP_016877414.1">
    <property type="nucleotide sequence ID" value="XM_017021925.1"/>
</dbReference>
<dbReference type="PDB" id="1BYG">
    <property type="method" value="X-ray"/>
    <property type="resolution" value="2.40 A"/>
    <property type="chains" value="A=173-450"/>
</dbReference>
<dbReference type="PDB" id="1CSK">
    <property type="method" value="X-ray"/>
    <property type="resolution" value="2.50 A"/>
    <property type="chains" value="A/B/C/D=1-71"/>
</dbReference>
<dbReference type="PDB" id="3D7T">
    <property type="method" value="X-ray"/>
    <property type="resolution" value="2.90 A"/>
    <property type="chains" value="A=188-450"/>
</dbReference>
<dbReference type="PDB" id="3D7U">
    <property type="method" value="X-ray"/>
    <property type="resolution" value="4.11 A"/>
    <property type="chains" value="A/C=188-450"/>
</dbReference>
<dbReference type="PDB" id="3EAC">
    <property type="method" value="X-ray"/>
    <property type="resolution" value="1.37 A"/>
    <property type="chains" value="A=73-178"/>
</dbReference>
<dbReference type="PDB" id="3EAZ">
    <property type="method" value="X-ray"/>
    <property type="resolution" value="1.31 A"/>
    <property type="chains" value="A=73-178"/>
</dbReference>
<dbReference type="PDBsum" id="1BYG"/>
<dbReference type="PDBsum" id="1CSK"/>
<dbReference type="PDBsum" id="3D7T"/>
<dbReference type="PDBsum" id="3D7U"/>
<dbReference type="PDBsum" id="3EAC"/>
<dbReference type="PDBsum" id="3EAZ"/>
<dbReference type="BMRB" id="P41240"/>
<dbReference type="SMR" id="P41240"/>
<dbReference type="BioGRID" id="107832">
    <property type="interactions" value="854"/>
</dbReference>
<dbReference type="CORUM" id="P41240"/>
<dbReference type="ELM" id="P41240"/>
<dbReference type="FunCoup" id="P41240">
    <property type="interactions" value="1651"/>
</dbReference>
<dbReference type="IntAct" id="P41240">
    <property type="interactions" value="107"/>
</dbReference>
<dbReference type="MINT" id="P41240"/>
<dbReference type="STRING" id="9606.ENSP00000220003"/>
<dbReference type="BindingDB" id="P41240"/>
<dbReference type="ChEMBL" id="CHEMBL2634"/>
<dbReference type="DrugBank" id="DB01254">
    <property type="generic name" value="Dasatinib"/>
</dbReference>
<dbReference type="DrugBank" id="DB12010">
    <property type="generic name" value="Fostamatinib"/>
</dbReference>
<dbReference type="DrugBank" id="DB02010">
    <property type="generic name" value="Staurosporine"/>
</dbReference>
<dbReference type="DrugBank" id="DB05075">
    <property type="generic name" value="TG-100801"/>
</dbReference>
<dbReference type="DrugCentral" id="P41240"/>
<dbReference type="GuidetoPHARMACOLOGY" id="1994"/>
<dbReference type="GlyGen" id="P41240">
    <property type="glycosylation" value="1 site, 1 O-linked glycan (1 site)"/>
</dbReference>
<dbReference type="iPTMnet" id="P41240"/>
<dbReference type="MetOSite" id="P41240"/>
<dbReference type="PhosphoSitePlus" id="P41240"/>
<dbReference type="BioMuta" id="CSK"/>
<dbReference type="DMDM" id="729887"/>
<dbReference type="OGP" id="P41240"/>
<dbReference type="CPTAC" id="CPTAC-2824"/>
<dbReference type="jPOST" id="P41240"/>
<dbReference type="MassIVE" id="P41240"/>
<dbReference type="PaxDb" id="9606-ENSP00000220003"/>
<dbReference type="PeptideAtlas" id="P41240"/>
<dbReference type="ProteomicsDB" id="55450"/>
<dbReference type="Pumba" id="P41240"/>
<dbReference type="Antibodypedia" id="4405">
    <property type="antibodies" value="795 antibodies from 40 providers"/>
</dbReference>
<dbReference type="DNASU" id="1445"/>
<dbReference type="Ensembl" id="ENST00000220003.14">
    <property type="protein sequence ID" value="ENSP00000220003.9"/>
    <property type="gene ID" value="ENSG00000103653.17"/>
</dbReference>
<dbReference type="Ensembl" id="ENST00000439220.6">
    <property type="protein sequence ID" value="ENSP00000414764.2"/>
    <property type="gene ID" value="ENSG00000103653.17"/>
</dbReference>
<dbReference type="Ensembl" id="ENST00000567571.5">
    <property type="protein sequence ID" value="ENSP00000454906.1"/>
    <property type="gene ID" value="ENSG00000103653.17"/>
</dbReference>
<dbReference type="GeneID" id="1445"/>
<dbReference type="KEGG" id="hsa:1445"/>
<dbReference type="MANE-Select" id="ENST00000220003.14">
    <property type="protein sequence ID" value="ENSP00000220003.9"/>
    <property type="RefSeq nucleotide sequence ID" value="NM_004383.3"/>
    <property type="RefSeq protein sequence ID" value="NP_004374.1"/>
</dbReference>
<dbReference type="UCSC" id="uc002ays.3">
    <property type="organism name" value="human"/>
</dbReference>
<dbReference type="AGR" id="HGNC:2444"/>
<dbReference type="CTD" id="1445"/>
<dbReference type="DisGeNET" id="1445"/>
<dbReference type="GeneCards" id="CSK"/>
<dbReference type="HGNC" id="HGNC:2444">
    <property type="gene designation" value="CSK"/>
</dbReference>
<dbReference type="HPA" id="ENSG00000103653">
    <property type="expression patterns" value="Tissue enhanced (lymphoid)"/>
</dbReference>
<dbReference type="MIM" id="124095">
    <property type="type" value="gene"/>
</dbReference>
<dbReference type="neXtProt" id="NX_P41240"/>
<dbReference type="OpenTargets" id="ENSG00000103653"/>
<dbReference type="PharmGKB" id="PA26946"/>
<dbReference type="VEuPathDB" id="HostDB:ENSG00000103653"/>
<dbReference type="eggNOG" id="KOG0197">
    <property type="taxonomic scope" value="Eukaryota"/>
</dbReference>
<dbReference type="GeneTree" id="ENSGT00940000157431"/>
<dbReference type="HOGENOM" id="CLU_000288_7_2_1"/>
<dbReference type="InParanoid" id="P41240"/>
<dbReference type="OMA" id="PTMTTHS"/>
<dbReference type="OrthoDB" id="346907at2759"/>
<dbReference type="PAN-GO" id="P41240">
    <property type="GO annotations" value="3 GO annotations based on evolutionary models"/>
</dbReference>
<dbReference type="PhylomeDB" id="P41240"/>
<dbReference type="TreeFam" id="TF351634"/>
<dbReference type="BRENDA" id="2.7.10.2">
    <property type="organism ID" value="2681"/>
</dbReference>
<dbReference type="PathwayCommons" id="P41240"/>
<dbReference type="Reactome" id="R-HSA-180292">
    <property type="pathway name" value="GAB1 signalosome"/>
</dbReference>
<dbReference type="Reactome" id="R-HSA-202427">
    <property type="pathway name" value="Phosphorylation of CD3 and TCR zeta chains"/>
</dbReference>
<dbReference type="Reactome" id="R-HSA-354192">
    <property type="pathway name" value="Integrin signaling"/>
</dbReference>
<dbReference type="Reactome" id="R-HSA-389948">
    <property type="pathway name" value="Co-inhibition by PD-1"/>
</dbReference>
<dbReference type="Reactome" id="R-HSA-5674135">
    <property type="pathway name" value="MAP2K and MAPK activation"/>
</dbReference>
<dbReference type="Reactome" id="R-HSA-6802946">
    <property type="pathway name" value="Signaling by moderate kinase activity BRAF mutants"/>
</dbReference>
<dbReference type="Reactome" id="R-HSA-6802948">
    <property type="pathway name" value="Signaling by high-kinase activity BRAF mutants"/>
</dbReference>
<dbReference type="Reactome" id="R-HSA-6802952">
    <property type="pathway name" value="Signaling by BRAF and RAF1 fusions"/>
</dbReference>
<dbReference type="Reactome" id="R-HSA-6802955">
    <property type="pathway name" value="Paradoxical activation of RAF signaling by kinase inactive BRAF"/>
</dbReference>
<dbReference type="Reactome" id="R-HSA-9013407">
    <property type="pathway name" value="RHOH GTPase cycle"/>
</dbReference>
<dbReference type="Reactome" id="R-HSA-9649948">
    <property type="pathway name" value="Signaling downstream of RAS mutants"/>
</dbReference>
<dbReference type="Reactome" id="R-HSA-9656223">
    <property type="pathway name" value="Signaling by RAF1 mutants"/>
</dbReference>
<dbReference type="Reactome" id="R-HSA-9706369">
    <property type="pathway name" value="Negative regulation of FLT3"/>
</dbReference>
<dbReference type="SignaLink" id="P41240"/>
<dbReference type="SIGNOR" id="P41240"/>
<dbReference type="BioGRID-ORCS" id="1445">
    <property type="hits" value="85 hits in 1203 CRISPR screens"/>
</dbReference>
<dbReference type="ChiTaRS" id="CSK">
    <property type="organism name" value="human"/>
</dbReference>
<dbReference type="EvolutionaryTrace" id="P41240"/>
<dbReference type="GeneWiki" id="C-src_tyrosine_kinase"/>
<dbReference type="GenomeRNAi" id="1445"/>
<dbReference type="Pharos" id="P41240">
    <property type="development level" value="Tchem"/>
</dbReference>
<dbReference type="PRO" id="PR:P41240"/>
<dbReference type="Proteomes" id="UP000005640">
    <property type="component" value="Chromosome 15"/>
</dbReference>
<dbReference type="RNAct" id="P41240">
    <property type="molecule type" value="protein"/>
</dbReference>
<dbReference type="Bgee" id="ENSG00000103653">
    <property type="expression patterns" value="Expressed in granulocyte and 189 other cell types or tissues"/>
</dbReference>
<dbReference type="ExpressionAtlas" id="P41240">
    <property type="expression patterns" value="baseline and differential"/>
</dbReference>
<dbReference type="GO" id="GO:0005911">
    <property type="term" value="C:cell-cell junction"/>
    <property type="evidence" value="ECO:0007669"/>
    <property type="project" value="Ensembl"/>
</dbReference>
<dbReference type="GO" id="GO:0005737">
    <property type="term" value="C:cytoplasm"/>
    <property type="evidence" value="ECO:0000250"/>
    <property type="project" value="UniProtKB"/>
</dbReference>
<dbReference type="GO" id="GO:0005829">
    <property type="term" value="C:cytosol"/>
    <property type="evidence" value="ECO:0000304"/>
    <property type="project" value="Reactome"/>
</dbReference>
<dbReference type="GO" id="GO:0070062">
    <property type="term" value="C:extracellular exosome"/>
    <property type="evidence" value="ECO:0007005"/>
    <property type="project" value="UniProtKB"/>
</dbReference>
<dbReference type="GO" id="GO:0005886">
    <property type="term" value="C:plasma membrane"/>
    <property type="evidence" value="ECO:0000353"/>
    <property type="project" value="UniProtKB"/>
</dbReference>
<dbReference type="GO" id="GO:0005524">
    <property type="term" value="F:ATP binding"/>
    <property type="evidence" value="ECO:0007669"/>
    <property type="project" value="UniProtKB-KW"/>
</dbReference>
<dbReference type="GO" id="GO:0042802">
    <property type="term" value="F:identical protein binding"/>
    <property type="evidence" value="ECO:0000353"/>
    <property type="project" value="IntAct"/>
</dbReference>
<dbReference type="GO" id="GO:0046872">
    <property type="term" value="F:metal ion binding"/>
    <property type="evidence" value="ECO:0007669"/>
    <property type="project" value="UniProtKB-KW"/>
</dbReference>
<dbReference type="GO" id="GO:0004715">
    <property type="term" value="F:non-membrane spanning protein tyrosine kinase activity"/>
    <property type="evidence" value="ECO:0000318"/>
    <property type="project" value="GO_Central"/>
</dbReference>
<dbReference type="GO" id="GO:0070064">
    <property type="term" value="F:proline-rich region binding"/>
    <property type="evidence" value="ECO:0007669"/>
    <property type="project" value="Ensembl"/>
</dbReference>
<dbReference type="GO" id="GO:0034236">
    <property type="term" value="F:protein kinase A catalytic subunit binding"/>
    <property type="evidence" value="ECO:0000353"/>
    <property type="project" value="UniProtKB"/>
</dbReference>
<dbReference type="GO" id="GO:0019903">
    <property type="term" value="F:protein phosphatase binding"/>
    <property type="evidence" value="ECO:0007669"/>
    <property type="project" value="Ensembl"/>
</dbReference>
<dbReference type="GO" id="GO:0004713">
    <property type="term" value="F:protein tyrosine kinase activity"/>
    <property type="evidence" value="ECO:0000304"/>
    <property type="project" value="Reactome"/>
</dbReference>
<dbReference type="GO" id="GO:1990782">
    <property type="term" value="F:protein tyrosine kinase binding"/>
    <property type="evidence" value="ECO:0007669"/>
    <property type="project" value="Ensembl"/>
</dbReference>
<dbReference type="GO" id="GO:0002250">
    <property type="term" value="P:adaptive immune response"/>
    <property type="evidence" value="ECO:0007669"/>
    <property type="project" value="UniProtKB-KW"/>
</dbReference>
<dbReference type="GO" id="GO:0034332">
    <property type="term" value="P:adherens junction organization"/>
    <property type="evidence" value="ECO:0000318"/>
    <property type="project" value="GO_Central"/>
</dbReference>
<dbReference type="GO" id="GO:0071375">
    <property type="term" value="P:cellular response to peptide hormone stimulus"/>
    <property type="evidence" value="ECO:0007669"/>
    <property type="project" value="Ensembl"/>
</dbReference>
<dbReference type="GO" id="GO:0035556">
    <property type="term" value="P:intracellular signal transduction"/>
    <property type="evidence" value="ECO:0007669"/>
    <property type="project" value="Ensembl"/>
</dbReference>
<dbReference type="GO" id="GO:0045779">
    <property type="term" value="P:negative regulation of bone resorption"/>
    <property type="evidence" value="ECO:0007669"/>
    <property type="project" value="Ensembl"/>
</dbReference>
<dbReference type="GO" id="GO:0008285">
    <property type="term" value="P:negative regulation of cell population proliferation"/>
    <property type="evidence" value="ECO:0007669"/>
    <property type="project" value="Ensembl"/>
</dbReference>
<dbReference type="GO" id="GO:0070373">
    <property type="term" value="P:negative regulation of ERK1 and ERK2 cascade"/>
    <property type="evidence" value="ECO:0007669"/>
    <property type="project" value="Ensembl"/>
</dbReference>
<dbReference type="GO" id="GO:0042997">
    <property type="term" value="P:negative regulation of Golgi to plasma membrane protein transport"/>
    <property type="evidence" value="ECO:0000314"/>
    <property type="project" value="UniProtKB"/>
</dbReference>
<dbReference type="GO" id="GO:0032715">
    <property type="term" value="P:negative regulation of interleukin-6 production"/>
    <property type="evidence" value="ECO:0007669"/>
    <property type="project" value="Ensembl"/>
</dbReference>
<dbReference type="GO" id="GO:0010989">
    <property type="term" value="P:negative regulation of low-density lipoprotein particle clearance"/>
    <property type="evidence" value="ECO:0007669"/>
    <property type="project" value="Ensembl"/>
</dbReference>
<dbReference type="GO" id="GO:0050765">
    <property type="term" value="P:negative regulation of phagocytosis"/>
    <property type="evidence" value="ECO:0007669"/>
    <property type="project" value="Ensembl"/>
</dbReference>
<dbReference type="GO" id="GO:0050868">
    <property type="term" value="P:negative regulation of T cell activation"/>
    <property type="evidence" value="ECO:0007669"/>
    <property type="project" value="Ensembl"/>
</dbReference>
<dbReference type="GO" id="GO:0050860">
    <property type="term" value="P:negative regulation of T cell receptor signaling pathway"/>
    <property type="evidence" value="ECO:0007669"/>
    <property type="project" value="Ensembl"/>
</dbReference>
<dbReference type="GO" id="GO:0048709">
    <property type="term" value="P:oligodendrocyte differentiation"/>
    <property type="evidence" value="ECO:0007669"/>
    <property type="project" value="Ensembl"/>
</dbReference>
<dbReference type="GO" id="GO:0006468">
    <property type="term" value="P:protein phosphorylation"/>
    <property type="evidence" value="ECO:0000304"/>
    <property type="project" value="ProtInc"/>
</dbReference>
<dbReference type="GO" id="GO:0060368">
    <property type="term" value="P:regulation of Fc receptor mediated stimulatory signaling pathway"/>
    <property type="evidence" value="ECO:0000318"/>
    <property type="project" value="GO_Central"/>
</dbReference>
<dbReference type="GO" id="GO:0031295">
    <property type="term" value="P:T cell costimulation"/>
    <property type="evidence" value="ECO:0000304"/>
    <property type="project" value="Reactome"/>
</dbReference>
<dbReference type="GO" id="GO:0050852">
    <property type="term" value="P:T cell receptor signaling pathway"/>
    <property type="evidence" value="ECO:0000304"/>
    <property type="project" value="Reactome"/>
</dbReference>
<dbReference type="CDD" id="cd05082">
    <property type="entry name" value="PTKc_Csk"/>
    <property type="match status" value="1"/>
</dbReference>
<dbReference type="CDD" id="cd09937">
    <property type="entry name" value="SH2_csk_like"/>
    <property type="match status" value="1"/>
</dbReference>
<dbReference type="CDD" id="cd11769">
    <property type="entry name" value="SH3_CSK"/>
    <property type="match status" value="1"/>
</dbReference>
<dbReference type="FunFam" id="1.10.510.10:FF:000272">
    <property type="entry name" value="Tyrosine-protein kinase"/>
    <property type="match status" value="1"/>
</dbReference>
<dbReference type="FunFam" id="2.30.30.40:FF:000146">
    <property type="entry name" value="Tyrosine-protein kinase"/>
    <property type="match status" value="1"/>
</dbReference>
<dbReference type="FunFam" id="3.30.200.20:FF:000053">
    <property type="entry name" value="Tyrosine-protein kinase"/>
    <property type="match status" value="1"/>
</dbReference>
<dbReference type="FunFam" id="3.30.505.10:FF:000023">
    <property type="entry name" value="Tyrosine-protein kinase"/>
    <property type="match status" value="1"/>
</dbReference>
<dbReference type="Gene3D" id="3.30.200.20">
    <property type="entry name" value="Phosphorylase Kinase, domain 1"/>
    <property type="match status" value="1"/>
</dbReference>
<dbReference type="Gene3D" id="3.30.505.10">
    <property type="entry name" value="SH2 domain"/>
    <property type="match status" value="1"/>
</dbReference>
<dbReference type="Gene3D" id="2.30.30.40">
    <property type="entry name" value="SH3 Domains"/>
    <property type="match status" value="1"/>
</dbReference>
<dbReference type="Gene3D" id="1.10.510.10">
    <property type="entry name" value="Transferase(Phosphotransferase) domain 1"/>
    <property type="match status" value="1"/>
</dbReference>
<dbReference type="InterPro" id="IPR035027">
    <property type="entry name" value="Csk-like_SH2"/>
</dbReference>
<dbReference type="InterPro" id="IPR011009">
    <property type="entry name" value="Kinase-like_dom_sf"/>
</dbReference>
<dbReference type="InterPro" id="IPR050198">
    <property type="entry name" value="Non-receptor_tyrosine_kinases"/>
</dbReference>
<dbReference type="InterPro" id="IPR000719">
    <property type="entry name" value="Prot_kinase_dom"/>
</dbReference>
<dbReference type="InterPro" id="IPR017441">
    <property type="entry name" value="Protein_kinase_ATP_BS"/>
</dbReference>
<dbReference type="InterPro" id="IPR001245">
    <property type="entry name" value="Ser-Thr/Tyr_kinase_cat_dom"/>
</dbReference>
<dbReference type="InterPro" id="IPR000980">
    <property type="entry name" value="SH2"/>
</dbReference>
<dbReference type="InterPro" id="IPR036860">
    <property type="entry name" value="SH2_dom_sf"/>
</dbReference>
<dbReference type="InterPro" id="IPR036028">
    <property type="entry name" value="SH3-like_dom_sf"/>
</dbReference>
<dbReference type="InterPro" id="IPR001452">
    <property type="entry name" value="SH3_domain"/>
</dbReference>
<dbReference type="InterPro" id="IPR008266">
    <property type="entry name" value="Tyr_kinase_AS"/>
</dbReference>
<dbReference type="InterPro" id="IPR020635">
    <property type="entry name" value="Tyr_kinase_cat_dom"/>
</dbReference>
<dbReference type="PANTHER" id="PTHR24418">
    <property type="entry name" value="TYROSINE-PROTEIN KINASE"/>
    <property type="match status" value="1"/>
</dbReference>
<dbReference type="Pfam" id="PF07714">
    <property type="entry name" value="PK_Tyr_Ser-Thr"/>
    <property type="match status" value="1"/>
</dbReference>
<dbReference type="Pfam" id="PF00017">
    <property type="entry name" value="SH2"/>
    <property type="match status" value="1"/>
</dbReference>
<dbReference type="Pfam" id="PF00018">
    <property type="entry name" value="SH3_1"/>
    <property type="match status" value="1"/>
</dbReference>
<dbReference type="PRINTS" id="PR00401">
    <property type="entry name" value="SH2DOMAIN"/>
</dbReference>
<dbReference type="PRINTS" id="PR00109">
    <property type="entry name" value="TYRKINASE"/>
</dbReference>
<dbReference type="SMART" id="SM00252">
    <property type="entry name" value="SH2"/>
    <property type="match status" value="1"/>
</dbReference>
<dbReference type="SMART" id="SM00326">
    <property type="entry name" value="SH3"/>
    <property type="match status" value="1"/>
</dbReference>
<dbReference type="SMART" id="SM00219">
    <property type="entry name" value="TyrKc"/>
    <property type="match status" value="1"/>
</dbReference>
<dbReference type="SUPFAM" id="SSF56112">
    <property type="entry name" value="Protein kinase-like (PK-like)"/>
    <property type="match status" value="1"/>
</dbReference>
<dbReference type="SUPFAM" id="SSF55550">
    <property type="entry name" value="SH2 domain"/>
    <property type="match status" value="1"/>
</dbReference>
<dbReference type="SUPFAM" id="SSF50044">
    <property type="entry name" value="SH3-domain"/>
    <property type="match status" value="1"/>
</dbReference>
<dbReference type="PROSITE" id="PS00107">
    <property type="entry name" value="PROTEIN_KINASE_ATP"/>
    <property type="match status" value="1"/>
</dbReference>
<dbReference type="PROSITE" id="PS50011">
    <property type="entry name" value="PROTEIN_KINASE_DOM"/>
    <property type="match status" value="1"/>
</dbReference>
<dbReference type="PROSITE" id="PS00109">
    <property type="entry name" value="PROTEIN_KINASE_TYR"/>
    <property type="match status" value="1"/>
</dbReference>
<dbReference type="PROSITE" id="PS50001">
    <property type="entry name" value="SH2"/>
    <property type="match status" value="1"/>
</dbReference>
<dbReference type="PROSITE" id="PS50002">
    <property type="entry name" value="SH3"/>
    <property type="match status" value="1"/>
</dbReference>
<protein>
    <recommendedName>
        <fullName>Tyrosine-protein kinase CSK</fullName>
        <ecNumber evidence="15 22 24">2.7.10.2</ecNumber>
    </recommendedName>
    <alternativeName>
        <fullName>C-Src kinase</fullName>
    </alternativeName>
    <alternativeName>
        <fullName>Protein-tyrosine kinase CYL</fullName>
    </alternativeName>
</protein>
<evidence type="ECO:0000250" key="1"/>
<evidence type="ECO:0000250" key="2">
    <source>
        <dbReference type="UniProtKB" id="P32577"/>
    </source>
</evidence>
<evidence type="ECO:0000250" key="3">
    <source>
        <dbReference type="UniProtKB" id="P41241"/>
    </source>
</evidence>
<evidence type="ECO:0000255" key="4">
    <source>
        <dbReference type="PROSITE-ProRule" id="PRU00159"/>
    </source>
</evidence>
<evidence type="ECO:0000255" key="5">
    <source>
        <dbReference type="PROSITE-ProRule" id="PRU00191"/>
    </source>
</evidence>
<evidence type="ECO:0000255" key="6">
    <source>
        <dbReference type="PROSITE-ProRule" id="PRU00192"/>
    </source>
</evidence>
<evidence type="ECO:0000255" key="7">
    <source>
        <dbReference type="PROSITE-ProRule" id="PRU10028"/>
    </source>
</evidence>
<evidence type="ECO:0000269" key="8">
    <source>
    </source>
</evidence>
<evidence type="ECO:0000269" key="9">
    <source>
    </source>
</evidence>
<evidence type="ECO:0000269" key="10">
    <source>
    </source>
</evidence>
<evidence type="ECO:0000269" key="11">
    <source>
    </source>
</evidence>
<evidence type="ECO:0000269" key="12">
    <source>
    </source>
</evidence>
<evidence type="ECO:0000269" key="13">
    <source>
    </source>
</evidence>
<evidence type="ECO:0000269" key="14">
    <source>
    </source>
</evidence>
<evidence type="ECO:0000269" key="15">
    <source>
    </source>
</evidence>
<evidence type="ECO:0000269" key="16">
    <source>
    </source>
</evidence>
<evidence type="ECO:0000269" key="17">
    <source>
    </source>
</evidence>
<evidence type="ECO:0000269" key="18">
    <source>
    </source>
</evidence>
<evidence type="ECO:0000269" key="19">
    <source>
    </source>
</evidence>
<evidence type="ECO:0000269" key="20">
    <source>
    </source>
</evidence>
<evidence type="ECO:0000269" key="21">
    <source>
    </source>
</evidence>
<evidence type="ECO:0000269" key="22">
    <source>
    </source>
</evidence>
<evidence type="ECO:0000269" key="23">
    <source>
    </source>
</evidence>
<evidence type="ECO:0000269" key="24">
    <source>
    </source>
</evidence>
<evidence type="ECO:0000269" key="25">
    <source ref="6"/>
</evidence>
<evidence type="ECO:0007744" key="26">
    <source>
    </source>
</evidence>
<evidence type="ECO:0007829" key="27">
    <source>
        <dbReference type="PDB" id="1BYG"/>
    </source>
</evidence>
<evidence type="ECO:0007829" key="28">
    <source>
        <dbReference type="PDB" id="1CSK"/>
    </source>
</evidence>
<evidence type="ECO:0007829" key="29">
    <source>
        <dbReference type="PDB" id="3EAC"/>
    </source>
</evidence>
<evidence type="ECO:0007829" key="30">
    <source>
        <dbReference type="PDB" id="3EAZ"/>
    </source>
</evidence>